<dbReference type="EMBL" id="L04787">
    <property type="protein sequence ID" value="AAA22965.1"/>
    <property type="molecule type" value="Genomic_DNA"/>
</dbReference>
<dbReference type="PIR" id="I40304">
    <property type="entry name" value="I40304"/>
</dbReference>
<dbReference type="SMR" id="P32779"/>
<dbReference type="GO" id="GO:0009279">
    <property type="term" value="C:cell outer membrane"/>
    <property type="evidence" value="ECO:0007669"/>
    <property type="project" value="UniProtKB-SubCell"/>
</dbReference>
<dbReference type="InterPro" id="IPR000680">
    <property type="entry name" value="Borrelia_lipo"/>
</dbReference>
<dbReference type="Pfam" id="PF00921">
    <property type="entry name" value="Lipoprotein_2"/>
    <property type="match status" value="1"/>
</dbReference>
<dbReference type="SUPFAM" id="SSF74748">
    <property type="entry name" value="Variable surface antigen VlsE"/>
    <property type="match status" value="1"/>
</dbReference>
<dbReference type="PROSITE" id="PS51257">
    <property type="entry name" value="PROKAR_LIPOPROTEIN"/>
    <property type="match status" value="1"/>
</dbReference>
<gene>
    <name evidence="3" type="primary">vlp25</name>
    <name evidence="2" type="synonym">vmp25</name>
</gene>
<evidence type="ECO:0000250" key="1">
    <source>
        <dbReference type="UniProtKB" id="P21875"/>
    </source>
</evidence>
<evidence type="ECO:0000303" key="2">
    <source>
    </source>
</evidence>
<evidence type="ECO:0000303" key="3">
    <source>
    </source>
</evidence>
<evidence type="ECO:0000305" key="4"/>
<evidence type="ECO:0000305" key="5">
    <source>
    </source>
</evidence>
<geneLocation type="plasmid" evidence="2"/>
<protein>
    <recommendedName>
        <fullName evidence="3">Variable large protein 25</fullName>
    </recommendedName>
    <alternativeName>
        <fullName>Variable major outer membrane lipoprotein 25</fullName>
    </alternativeName>
</protein>
<reference key="1">
    <citation type="journal article" date="1992" name="Mol. Microbiol.">
        <title>Subtelomeric expression regions of Borrelia hermsii linear plasmids are highly polymorphic.</title>
        <authorList>
            <person name="Restrepo B.I."/>
            <person name="Kitten T."/>
            <person name="Carter C.J."/>
            <person name="Infante D."/>
            <person name="Barbour A.G."/>
        </authorList>
    </citation>
    <scope>NUCLEOTIDE SEQUENCE [GENOMIC DNA]</scope>
    <source>
        <strain>ATCC 35209 / HS1</strain>
    </source>
</reference>
<reference key="2">
    <citation type="journal article" date="1998" name="Infect. Immun.">
        <title>Population structure of the relapsing fever spirochete Borrelia hermsii as indicated by polymorphism of two multigene families that encode immunogenic outer surface lipoproteins.</title>
        <authorList>
            <person name="Hinnebusch B.J."/>
            <person name="Barbour A.G."/>
            <person name="Restrepo B.I."/>
            <person name="Schwan T.G."/>
        </authorList>
    </citation>
    <scope>NOMENCLATURE</scope>
</reference>
<sequence>MRKRISAIINKLNISIMMMIVVLMIGCGQQAVEAGKDGAAAATGGRSLSEVLMEVGKSAENAFYSFMALVPDTLGLRVTKDTKKNEVGGYFNSLGGKLGKASDELEEVAKKSEVEGAKDGPIAVAIRAAVDTAKTTLSTLKEHLESLKGIGDDDKVGEATSNQNGVAASTDELKGAFKALKGIVDTAGKEGVAKPKAGDTAVKIGNADNKDGAKVLAAAANAGRAVGDKAAAIVSAVSGEEMLASIVASQEGDADAALAADATAQTSALKFARGGGNAGQLAKEAAKAAAVAGGIALRSLVKGGKLAANNNDDDKVVQSAGVTAVNKLLVAVEGIIKKTVKNVLEKAKGEIDKARAPKATGQ</sequence>
<keyword id="KW-0998">Cell outer membrane</keyword>
<keyword id="KW-0449">Lipoprotein</keyword>
<keyword id="KW-0472">Membrane</keyword>
<keyword id="KW-0564">Palmitate</keyword>
<keyword id="KW-0614">Plasmid</keyword>
<keyword id="KW-0732">Signal</keyword>
<proteinExistence type="inferred from homology"/>
<comment type="function">
    <text evidence="1">The Vlp and Vsp proteins are antigenically distinct proteins, only one vlp or vsp gene is transcriptionally active at any one time. Switching between these genes is a mechanism of host immune response evasion.</text>
</comment>
<comment type="subcellular location">
    <subcellularLocation>
        <location evidence="1">Cell outer membrane</location>
        <topology>Lipid-anchor</topology>
    </subcellularLocation>
</comment>
<comment type="miscellaneous">
    <text evidence="5">Genes for both Vlp and Vsp families are on (usually) unnamed linear plasmids in B.hermsii HS1.</text>
</comment>
<comment type="similarity">
    <text evidence="4">Belongs to the variable large protein (Vlp) family. Alpha subfamily.</text>
</comment>
<feature type="signal peptide" evidence="4">
    <location>
        <begin position="1"/>
        <end position="26"/>
    </location>
</feature>
<feature type="chain" id="PRO_0000018091" description="Variable large protein 25">
    <location>
        <begin position="27"/>
        <end position="362"/>
    </location>
</feature>
<feature type="lipid moiety-binding region" description="N-palmitoyl cysteine" evidence="4">
    <location>
        <position position="27"/>
    </location>
</feature>
<feature type="lipid moiety-binding region" description="S-diacylglycerol cysteine" evidence="4">
    <location>
        <position position="27"/>
    </location>
</feature>
<name>VLP25_BORHE</name>
<accession>P32779</accession>
<organism>
    <name type="scientific">Borrelia hermsii</name>
    <dbReference type="NCBI Taxonomy" id="140"/>
    <lineage>
        <taxon>Bacteria</taxon>
        <taxon>Pseudomonadati</taxon>
        <taxon>Spirochaetota</taxon>
        <taxon>Spirochaetia</taxon>
        <taxon>Spirochaetales</taxon>
        <taxon>Borreliaceae</taxon>
        <taxon>Borrelia</taxon>
    </lineage>
</organism>